<proteinExistence type="evidence at protein level"/>
<dbReference type="EMBL" id="AC008687">
    <property type="status" value="NOT_ANNOTATED_CDS"/>
    <property type="molecule type" value="Genomic_DNA"/>
</dbReference>
<dbReference type="EMBL" id="CH471177">
    <property type="protein sequence ID" value="EAW52433.1"/>
    <property type="molecule type" value="Genomic_DNA"/>
</dbReference>
<dbReference type="CCDS" id="CCDS92661.1"/>
<dbReference type="RefSeq" id="NP_001382940.1">
    <property type="nucleotide sequence ID" value="NM_001396011.1"/>
</dbReference>
<dbReference type="BioMuta" id="ENSG00000268655"/>
<dbReference type="MassIVE" id="A0A1B0GTJ6"/>
<dbReference type="PeptideAtlas" id="A0A1B0GTJ6"/>
<dbReference type="Antibodypedia" id="81417">
    <property type="antibodies" value="1 antibodies from 1 providers"/>
</dbReference>
<dbReference type="Ensembl" id="ENST00000637680.2">
    <property type="protein sequence ID" value="ENSP00000489727.1"/>
    <property type="gene ID" value="ENSG00000268655.3"/>
</dbReference>
<dbReference type="GeneID" id="101059948"/>
<dbReference type="MANE-Select" id="ENST00000637680.2">
    <property type="protein sequence ID" value="ENSP00000489727.1"/>
    <property type="RefSeq nucleotide sequence ID" value="NM_001396011.1"/>
    <property type="RefSeq protein sequence ID" value="NP_001382940.1"/>
</dbReference>
<dbReference type="AGR" id="HGNC:56771"/>
<dbReference type="GeneCards" id="SAXO3"/>
<dbReference type="HGNC" id="HGNC:56771">
    <property type="gene designation" value="SAXO3"/>
</dbReference>
<dbReference type="OpenTargets" id="ENSG00000268655"/>
<dbReference type="VEuPathDB" id="HostDB:ENSG00000268655"/>
<dbReference type="GeneTree" id="ENSGT00390000012322"/>
<dbReference type="OMA" id="KAPGHWK"/>
<dbReference type="OrthoDB" id="382863at2759"/>
<dbReference type="PAN-GO" id="A0A1B0GTJ6">
    <property type="GO annotations" value="0 GO annotations based on evolutionary models"/>
</dbReference>
<dbReference type="PRO" id="PR:A0A1B0GTJ6"/>
<dbReference type="Proteomes" id="UP000005640">
    <property type="component" value="Chromosome 19"/>
</dbReference>
<dbReference type="RNAct" id="A0A1B0GTJ6">
    <property type="molecule type" value="protein"/>
</dbReference>
<dbReference type="Bgee" id="ENSG00000268655">
    <property type="expression patterns" value="Expressed in body of pancreas and 90 other cell types or tissues"/>
</dbReference>
<dbReference type="InterPro" id="IPR053347">
    <property type="entry name" value="Axonemal_MT_stabilizer"/>
</dbReference>
<dbReference type="PANTHER" id="PTHR37404">
    <property type="entry name" value="HCG1796489"/>
    <property type="match status" value="1"/>
</dbReference>
<dbReference type="PANTHER" id="PTHR37404:SF1">
    <property type="entry name" value="HCG1796489"/>
    <property type="match status" value="1"/>
</dbReference>
<evidence type="ECO:0000256" key="1">
    <source>
        <dbReference type="SAM" id="MobiDB-lite"/>
    </source>
</evidence>
<evidence type="ECO:0000305" key="2"/>
<evidence type="ECO:0000312" key="3">
    <source>
        <dbReference type="HGNC" id="HGNC:56771"/>
    </source>
</evidence>
<protein>
    <recommendedName>
        <fullName evidence="2">Stabilizer of axonemal microtubules 3</fullName>
    </recommendedName>
</protein>
<name>SAXO3_HUMAN</name>
<reference key="1">
    <citation type="journal article" date="2004" name="Nature">
        <title>The DNA sequence and biology of human chromosome 19.</title>
        <authorList>
            <person name="Grimwood J."/>
            <person name="Gordon L.A."/>
            <person name="Olsen A.S."/>
            <person name="Terry A."/>
            <person name="Schmutz J."/>
            <person name="Lamerdin J.E."/>
            <person name="Hellsten U."/>
            <person name="Goodstein D."/>
            <person name="Couronne O."/>
            <person name="Tran-Gyamfi M."/>
            <person name="Aerts A."/>
            <person name="Altherr M."/>
            <person name="Ashworth L."/>
            <person name="Bajorek E."/>
            <person name="Black S."/>
            <person name="Branscomb E."/>
            <person name="Caenepeel S."/>
            <person name="Carrano A.V."/>
            <person name="Caoile C."/>
            <person name="Chan Y.M."/>
            <person name="Christensen M."/>
            <person name="Cleland C.A."/>
            <person name="Copeland A."/>
            <person name="Dalin E."/>
            <person name="Dehal P."/>
            <person name="Denys M."/>
            <person name="Detter J.C."/>
            <person name="Escobar J."/>
            <person name="Flowers D."/>
            <person name="Fotopulos D."/>
            <person name="Garcia C."/>
            <person name="Georgescu A.M."/>
            <person name="Glavina T."/>
            <person name="Gomez M."/>
            <person name="Gonzales E."/>
            <person name="Groza M."/>
            <person name="Hammon N."/>
            <person name="Hawkins T."/>
            <person name="Haydu L."/>
            <person name="Ho I."/>
            <person name="Huang W."/>
            <person name="Israni S."/>
            <person name="Jett J."/>
            <person name="Kadner K."/>
            <person name="Kimball H."/>
            <person name="Kobayashi A."/>
            <person name="Larionov V."/>
            <person name="Leem S.-H."/>
            <person name="Lopez F."/>
            <person name="Lou Y."/>
            <person name="Lowry S."/>
            <person name="Malfatti S."/>
            <person name="Martinez D."/>
            <person name="McCready P.M."/>
            <person name="Medina C."/>
            <person name="Morgan J."/>
            <person name="Nelson K."/>
            <person name="Nolan M."/>
            <person name="Ovcharenko I."/>
            <person name="Pitluck S."/>
            <person name="Pollard M."/>
            <person name="Popkie A.P."/>
            <person name="Predki P."/>
            <person name="Quan G."/>
            <person name="Ramirez L."/>
            <person name="Rash S."/>
            <person name="Retterer J."/>
            <person name="Rodriguez A."/>
            <person name="Rogers S."/>
            <person name="Salamov A."/>
            <person name="Salazar A."/>
            <person name="She X."/>
            <person name="Smith D."/>
            <person name="Slezak T."/>
            <person name="Solovyev V."/>
            <person name="Thayer N."/>
            <person name="Tice H."/>
            <person name="Tsai M."/>
            <person name="Ustaszewska A."/>
            <person name="Vo N."/>
            <person name="Wagner M."/>
            <person name="Wheeler J."/>
            <person name="Wu K."/>
            <person name="Xie G."/>
            <person name="Yang J."/>
            <person name="Dubchak I."/>
            <person name="Furey T.S."/>
            <person name="DeJong P."/>
            <person name="Dickson M."/>
            <person name="Gordon D."/>
            <person name="Eichler E.E."/>
            <person name="Pennacchio L.A."/>
            <person name="Richardson P."/>
            <person name="Stubbs L."/>
            <person name="Rokhsar D.S."/>
            <person name="Myers R.M."/>
            <person name="Rubin E.M."/>
            <person name="Lucas S.M."/>
        </authorList>
    </citation>
    <scope>NUCLEOTIDE SEQUENCE [LARGE SCALE GENOMIC DNA]</scope>
</reference>
<reference key="2">
    <citation type="submission" date="2005-07" db="EMBL/GenBank/DDBJ databases">
        <authorList>
            <person name="Mural R.J."/>
            <person name="Istrail S."/>
            <person name="Sutton G.G."/>
            <person name="Florea L."/>
            <person name="Halpern A.L."/>
            <person name="Mobarry C.M."/>
            <person name="Lippert R."/>
            <person name="Walenz B."/>
            <person name="Shatkay H."/>
            <person name="Dew I."/>
            <person name="Miller J.R."/>
            <person name="Flanigan M.J."/>
            <person name="Edwards N.J."/>
            <person name="Bolanos R."/>
            <person name="Fasulo D."/>
            <person name="Halldorsson B.V."/>
            <person name="Hannenhalli S."/>
            <person name="Turner R."/>
            <person name="Yooseph S."/>
            <person name="Lu F."/>
            <person name="Nusskern D.R."/>
            <person name="Shue B.C."/>
            <person name="Zheng X.H."/>
            <person name="Zhong F."/>
            <person name="Delcher A.L."/>
            <person name="Huson D.H."/>
            <person name="Kravitz S.A."/>
            <person name="Mouchard L."/>
            <person name="Reinert K."/>
            <person name="Remington K.A."/>
            <person name="Clark A.G."/>
            <person name="Waterman M.S."/>
            <person name="Eichler E.E."/>
            <person name="Adams M.D."/>
            <person name="Hunkapiller M.W."/>
            <person name="Myers E.W."/>
            <person name="Venter J.C."/>
        </authorList>
    </citation>
    <scope>NUCLEOTIDE SEQUENCE [LARGE SCALE GENOMIC DNA]</scope>
</reference>
<accession>A0A1B0GTJ6</accession>
<gene>
    <name evidence="3" type="primary">SAXO3</name>
</gene>
<keyword id="KW-1267">Proteomics identification</keyword>
<keyword id="KW-1185">Reference proteome</keyword>
<organism>
    <name type="scientific">Homo sapiens</name>
    <name type="common">Human</name>
    <dbReference type="NCBI Taxonomy" id="9606"/>
    <lineage>
        <taxon>Eukaryota</taxon>
        <taxon>Metazoa</taxon>
        <taxon>Chordata</taxon>
        <taxon>Craniata</taxon>
        <taxon>Vertebrata</taxon>
        <taxon>Euteleostomi</taxon>
        <taxon>Mammalia</taxon>
        <taxon>Eutheria</taxon>
        <taxon>Euarchontoglires</taxon>
        <taxon>Primates</taxon>
        <taxon>Haplorrhini</taxon>
        <taxon>Catarrhini</taxon>
        <taxon>Hominidae</taxon>
        <taxon>Homo</taxon>
    </lineage>
</organism>
<sequence>MASGTLAPGCRISATEVPGSRPNCHLTSSYFSHRIIPPIPFTPPTVQSTVADPLPQVAKQDSHNWAFDEVLSRWETTSGSAYVPKTHGGPCAQPRAPEPADPTRTVGIKDLGEKLRHRGWRLPLTTKYQSSETRAQYTGSPSGDPRAPEYFGPQPPQLADHHRGGPSQALIAWTKNPELSGRPFTVSDRGVLDRRQLYLTTSARDFRFYPKTELSGYPRKDSLTYWSFEETPQVWSHGPQRPPCPRSSRPPRPPRVRVPRVSPVTSAMPHRGALSLAQESYSPLLHPLRRLDRFCPLEAPWGGPHWKPLRGIYSVPKAYSTENSSYGSLKPALV</sequence>
<feature type="chain" id="PRO_0000458665" description="Stabilizer of axonemal microtubules 3">
    <location>
        <begin position="1"/>
        <end position="334"/>
    </location>
</feature>
<feature type="region of interest" description="Disordered" evidence="1">
    <location>
        <begin position="81"/>
        <end position="105"/>
    </location>
</feature>
<feature type="region of interest" description="Disordered" evidence="1">
    <location>
        <begin position="128"/>
        <end position="153"/>
    </location>
</feature>
<feature type="region of interest" description="Disordered" evidence="1">
    <location>
        <begin position="233"/>
        <end position="260"/>
    </location>
</feature>
<feature type="compositionally biased region" description="Polar residues" evidence="1">
    <location>
        <begin position="128"/>
        <end position="141"/>
    </location>
</feature>
<feature type="compositionally biased region" description="Pro residues" evidence="1">
    <location>
        <begin position="240"/>
        <end position="251"/>
    </location>
</feature>